<evidence type="ECO:0000250" key="1">
    <source>
        <dbReference type="UniProtKB" id="Q8C428"/>
    </source>
</evidence>
<evidence type="ECO:0000255" key="2"/>
<evidence type="ECO:0000256" key="3">
    <source>
        <dbReference type="SAM" id="MobiDB-lite"/>
    </source>
</evidence>
<evidence type="ECO:0000269" key="4">
    <source>
    </source>
</evidence>
<evidence type="ECO:0000269" key="5">
    <source>
    </source>
</evidence>
<evidence type="ECO:0000269" key="6">
    <source>
    </source>
</evidence>
<evidence type="ECO:0000269" key="7">
    <source>
    </source>
</evidence>
<evidence type="ECO:0000303" key="8">
    <source>
    </source>
</evidence>
<evidence type="ECO:0000303" key="9">
    <source>
    </source>
</evidence>
<evidence type="ECO:0000305" key="10"/>
<evidence type="ECO:0000312" key="11">
    <source>
        <dbReference type="HGNC" id="HGNC:23000"/>
    </source>
</evidence>
<evidence type="ECO:0007744" key="12">
    <source>
    </source>
</evidence>
<reference key="1">
    <citation type="journal article" date="2003" name="BMC Genomics">
        <title>TMC and EVER genes belong to a larger novel family, the TMC gene family encoding transmembrane proteins.</title>
        <authorList>
            <person name="Keresztes G."/>
            <person name="Mutai H."/>
            <person name="Heller S."/>
        </authorList>
    </citation>
    <scope>NUCLEOTIDE SEQUENCE [MRNA] (ISOFORM 1)</scope>
    <scope>VARIANT GLU-254</scope>
</reference>
<reference key="2">
    <citation type="journal article" date="2003" name="Genomics">
        <title>Characterization of the transmembrane channel-like (TMC) gene family: functional clues from hearing loss and epidermodysplasia verruciformis.</title>
        <authorList>
            <person name="Kurima K."/>
            <person name="Yang Y."/>
            <person name="Sorber K."/>
            <person name="Griffith A.J."/>
        </authorList>
    </citation>
    <scope>NUCLEOTIDE SEQUENCE [MRNA] (ISOFORM 1)</scope>
</reference>
<reference key="3">
    <citation type="journal article" date="2007" name="BMC Genomics">
        <title>The full-ORF clone resource of the German cDNA consortium.</title>
        <authorList>
            <person name="Bechtel S."/>
            <person name="Rosenfelder H."/>
            <person name="Duda A."/>
            <person name="Schmidt C.P."/>
            <person name="Ernst U."/>
            <person name="Wellenreuther R."/>
            <person name="Mehrle A."/>
            <person name="Schuster C."/>
            <person name="Bahr A."/>
            <person name="Bloecker H."/>
            <person name="Heubner D."/>
            <person name="Hoerlein A."/>
            <person name="Michel G."/>
            <person name="Wedler H."/>
            <person name="Koehrer K."/>
            <person name="Ottenwaelder B."/>
            <person name="Poustka A."/>
            <person name="Wiemann S."/>
            <person name="Schupp I."/>
        </authorList>
    </citation>
    <scope>NUCLEOTIDE SEQUENCE [LARGE SCALE MRNA] (ISOFORM 2)</scope>
    <scope>VARIANT GLU-254</scope>
</reference>
<reference key="4">
    <citation type="journal article" date="2004" name="Nature">
        <title>The sequence and analysis of duplication-rich human chromosome 16.</title>
        <authorList>
            <person name="Martin J."/>
            <person name="Han C."/>
            <person name="Gordon L.A."/>
            <person name="Terry A."/>
            <person name="Prabhakar S."/>
            <person name="She X."/>
            <person name="Xie G."/>
            <person name="Hellsten U."/>
            <person name="Chan Y.M."/>
            <person name="Altherr M."/>
            <person name="Couronne O."/>
            <person name="Aerts A."/>
            <person name="Bajorek E."/>
            <person name="Black S."/>
            <person name="Blumer H."/>
            <person name="Branscomb E."/>
            <person name="Brown N.C."/>
            <person name="Bruno W.J."/>
            <person name="Buckingham J.M."/>
            <person name="Callen D.F."/>
            <person name="Campbell C.S."/>
            <person name="Campbell M.L."/>
            <person name="Campbell E.W."/>
            <person name="Caoile C."/>
            <person name="Challacombe J.F."/>
            <person name="Chasteen L.A."/>
            <person name="Chertkov O."/>
            <person name="Chi H.C."/>
            <person name="Christensen M."/>
            <person name="Clark L.M."/>
            <person name="Cohn J.D."/>
            <person name="Denys M."/>
            <person name="Detter J.C."/>
            <person name="Dickson M."/>
            <person name="Dimitrijevic-Bussod M."/>
            <person name="Escobar J."/>
            <person name="Fawcett J.J."/>
            <person name="Flowers D."/>
            <person name="Fotopulos D."/>
            <person name="Glavina T."/>
            <person name="Gomez M."/>
            <person name="Gonzales E."/>
            <person name="Goodstein D."/>
            <person name="Goodwin L.A."/>
            <person name="Grady D.L."/>
            <person name="Grigoriev I."/>
            <person name="Groza M."/>
            <person name="Hammon N."/>
            <person name="Hawkins T."/>
            <person name="Haydu L."/>
            <person name="Hildebrand C.E."/>
            <person name="Huang W."/>
            <person name="Israni S."/>
            <person name="Jett J."/>
            <person name="Jewett P.B."/>
            <person name="Kadner K."/>
            <person name="Kimball H."/>
            <person name="Kobayashi A."/>
            <person name="Krawczyk M.-C."/>
            <person name="Leyba T."/>
            <person name="Longmire J.L."/>
            <person name="Lopez F."/>
            <person name="Lou Y."/>
            <person name="Lowry S."/>
            <person name="Ludeman T."/>
            <person name="Manohar C.F."/>
            <person name="Mark G.A."/>
            <person name="McMurray K.L."/>
            <person name="Meincke L.J."/>
            <person name="Morgan J."/>
            <person name="Moyzis R.K."/>
            <person name="Mundt M.O."/>
            <person name="Munk A.C."/>
            <person name="Nandkeshwar R.D."/>
            <person name="Pitluck S."/>
            <person name="Pollard M."/>
            <person name="Predki P."/>
            <person name="Parson-Quintana B."/>
            <person name="Ramirez L."/>
            <person name="Rash S."/>
            <person name="Retterer J."/>
            <person name="Ricke D.O."/>
            <person name="Robinson D.L."/>
            <person name="Rodriguez A."/>
            <person name="Salamov A."/>
            <person name="Saunders E.H."/>
            <person name="Scott D."/>
            <person name="Shough T."/>
            <person name="Stallings R.L."/>
            <person name="Stalvey M."/>
            <person name="Sutherland R.D."/>
            <person name="Tapia R."/>
            <person name="Tesmer J.G."/>
            <person name="Thayer N."/>
            <person name="Thompson L.S."/>
            <person name="Tice H."/>
            <person name="Torney D.C."/>
            <person name="Tran-Gyamfi M."/>
            <person name="Tsai M."/>
            <person name="Ulanovsky L.E."/>
            <person name="Ustaszewska A."/>
            <person name="Vo N."/>
            <person name="White P.S."/>
            <person name="Williams A.L."/>
            <person name="Wills P.L."/>
            <person name="Wu J.-R."/>
            <person name="Wu K."/>
            <person name="Yang J."/>
            <person name="DeJong P."/>
            <person name="Bruce D."/>
            <person name="Doggett N.A."/>
            <person name="Deaven L."/>
            <person name="Schmutz J."/>
            <person name="Grimwood J."/>
            <person name="Richardson P."/>
            <person name="Rokhsar D.S."/>
            <person name="Eichler E.E."/>
            <person name="Gilna P."/>
            <person name="Lucas S.M."/>
            <person name="Myers R.M."/>
            <person name="Rubin E.M."/>
            <person name="Pennacchio L.A."/>
        </authorList>
    </citation>
    <scope>NUCLEOTIDE SEQUENCE [LARGE SCALE GENOMIC DNA] (ISOFORM 2)</scope>
</reference>
<reference key="5">
    <citation type="journal article" date="2004" name="Genome Res.">
        <title>The status, quality, and expansion of the NIH full-length cDNA project: the Mammalian Gene Collection (MGC).</title>
        <authorList>
            <consortium name="The MGC Project Team"/>
        </authorList>
    </citation>
    <scope>NUCLEOTIDE SEQUENCE [LARGE SCALE MRNA] (ISOFORM 1)</scope>
    <scope>VARIANTS TRP-59 AND GLU-254</scope>
    <source>
        <tissue>Brain</tissue>
    </source>
</reference>
<reference key="6">
    <citation type="journal article" date="2004" name="Nat. Genet.">
        <title>Complete sequencing and characterization of 21,243 full-length human cDNAs.</title>
        <authorList>
            <person name="Ota T."/>
            <person name="Suzuki Y."/>
            <person name="Nishikawa T."/>
            <person name="Otsuki T."/>
            <person name="Sugiyama T."/>
            <person name="Irie R."/>
            <person name="Wakamatsu A."/>
            <person name="Hayashi K."/>
            <person name="Sato H."/>
            <person name="Nagai K."/>
            <person name="Kimura K."/>
            <person name="Makita H."/>
            <person name="Sekine M."/>
            <person name="Obayashi M."/>
            <person name="Nishi T."/>
            <person name="Shibahara T."/>
            <person name="Tanaka T."/>
            <person name="Ishii S."/>
            <person name="Yamamoto J."/>
            <person name="Saito K."/>
            <person name="Kawai Y."/>
            <person name="Isono Y."/>
            <person name="Nakamura Y."/>
            <person name="Nagahari K."/>
            <person name="Murakami K."/>
            <person name="Yasuda T."/>
            <person name="Iwayanagi T."/>
            <person name="Wagatsuma M."/>
            <person name="Shiratori A."/>
            <person name="Sudo H."/>
            <person name="Hosoiri T."/>
            <person name="Kaku Y."/>
            <person name="Kodaira H."/>
            <person name="Kondo H."/>
            <person name="Sugawara M."/>
            <person name="Takahashi M."/>
            <person name="Kanda K."/>
            <person name="Yokoi T."/>
            <person name="Furuya T."/>
            <person name="Kikkawa E."/>
            <person name="Omura Y."/>
            <person name="Abe K."/>
            <person name="Kamihara K."/>
            <person name="Katsuta N."/>
            <person name="Sato K."/>
            <person name="Tanikawa M."/>
            <person name="Yamazaki M."/>
            <person name="Ninomiya K."/>
            <person name="Ishibashi T."/>
            <person name="Yamashita H."/>
            <person name="Murakawa K."/>
            <person name="Fujimori K."/>
            <person name="Tanai H."/>
            <person name="Kimata M."/>
            <person name="Watanabe M."/>
            <person name="Hiraoka S."/>
            <person name="Chiba Y."/>
            <person name="Ishida S."/>
            <person name="Ono Y."/>
            <person name="Takiguchi S."/>
            <person name="Watanabe S."/>
            <person name="Yosida M."/>
            <person name="Hotuta T."/>
            <person name="Kusano J."/>
            <person name="Kanehori K."/>
            <person name="Takahashi-Fujii A."/>
            <person name="Hara H."/>
            <person name="Tanase T.-O."/>
            <person name="Nomura Y."/>
            <person name="Togiya S."/>
            <person name="Komai F."/>
            <person name="Hara R."/>
            <person name="Takeuchi K."/>
            <person name="Arita M."/>
            <person name="Imose N."/>
            <person name="Musashino K."/>
            <person name="Yuuki H."/>
            <person name="Oshima A."/>
            <person name="Sasaki N."/>
            <person name="Aotsuka S."/>
            <person name="Yoshikawa Y."/>
            <person name="Matsunawa H."/>
            <person name="Ichihara T."/>
            <person name="Shiohata N."/>
            <person name="Sano S."/>
            <person name="Moriya S."/>
            <person name="Momiyama H."/>
            <person name="Satoh N."/>
            <person name="Takami S."/>
            <person name="Terashima Y."/>
            <person name="Suzuki O."/>
            <person name="Nakagawa S."/>
            <person name="Senoh A."/>
            <person name="Mizoguchi H."/>
            <person name="Goto Y."/>
            <person name="Shimizu F."/>
            <person name="Wakebe H."/>
            <person name="Hishigaki H."/>
            <person name="Watanabe T."/>
            <person name="Sugiyama A."/>
            <person name="Takemoto M."/>
            <person name="Kawakami B."/>
            <person name="Yamazaki M."/>
            <person name="Watanabe K."/>
            <person name="Kumagai A."/>
            <person name="Itakura S."/>
            <person name="Fukuzumi Y."/>
            <person name="Fujimori Y."/>
            <person name="Komiyama M."/>
            <person name="Tashiro H."/>
            <person name="Tanigami A."/>
            <person name="Fujiwara T."/>
            <person name="Ono T."/>
            <person name="Yamada K."/>
            <person name="Fujii Y."/>
            <person name="Ozaki K."/>
            <person name="Hirao M."/>
            <person name="Ohmori Y."/>
            <person name="Kawabata A."/>
            <person name="Hikiji T."/>
            <person name="Kobatake N."/>
            <person name="Inagaki H."/>
            <person name="Ikema Y."/>
            <person name="Okamoto S."/>
            <person name="Okitani R."/>
            <person name="Kawakami T."/>
            <person name="Noguchi S."/>
            <person name="Itoh T."/>
            <person name="Shigeta K."/>
            <person name="Senba T."/>
            <person name="Matsumura K."/>
            <person name="Nakajima Y."/>
            <person name="Mizuno T."/>
            <person name="Morinaga M."/>
            <person name="Sasaki M."/>
            <person name="Togashi T."/>
            <person name="Oyama M."/>
            <person name="Hata H."/>
            <person name="Watanabe M."/>
            <person name="Komatsu T."/>
            <person name="Mizushima-Sugano J."/>
            <person name="Satoh T."/>
            <person name="Shirai Y."/>
            <person name="Takahashi Y."/>
            <person name="Nakagawa K."/>
            <person name="Okumura K."/>
            <person name="Nagase T."/>
            <person name="Nomura N."/>
            <person name="Kikuchi H."/>
            <person name="Masuho Y."/>
            <person name="Yamashita R."/>
            <person name="Nakai K."/>
            <person name="Yada T."/>
            <person name="Nakamura Y."/>
            <person name="Ohara O."/>
            <person name="Isogai T."/>
            <person name="Sugano S."/>
        </authorList>
    </citation>
    <scope>NUCLEOTIDE SEQUENCE [LARGE SCALE MRNA] OF 222-723 (ISOFORMS 1 AND 2)</scope>
    <scope>VARIANT GLU-254</scope>
    <source>
        <tissue>Colon</tissue>
    </source>
</reference>
<reference key="7">
    <citation type="journal article" date="2013" name="J. Proteome Res.">
        <title>Toward a comprehensive characterization of a human cancer cell phosphoproteome.</title>
        <authorList>
            <person name="Zhou H."/>
            <person name="Di Palma S."/>
            <person name="Preisinger C."/>
            <person name="Peng M."/>
            <person name="Polat A.N."/>
            <person name="Heck A.J."/>
            <person name="Mohammed S."/>
        </authorList>
    </citation>
    <scope>PHOSPHORYLATION [LARGE SCALE ANALYSIS] AT SER-89</scope>
    <scope>IDENTIFICATION BY MASS SPECTROMETRY [LARGE SCALE ANALYSIS]</scope>
    <source>
        <tissue>Erythroleukemia</tissue>
    </source>
</reference>
<organism>
    <name type="scientific">Homo sapiens</name>
    <name type="common">Human</name>
    <dbReference type="NCBI Taxonomy" id="9606"/>
    <lineage>
        <taxon>Eukaryota</taxon>
        <taxon>Metazoa</taxon>
        <taxon>Chordata</taxon>
        <taxon>Craniata</taxon>
        <taxon>Vertebrata</taxon>
        <taxon>Euteleostomi</taxon>
        <taxon>Mammalia</taxon>
        <taxon>Eutheria</taxon>
        <taxon>Euarchontoglires</taxon>
        <taxon>Primates</taxon>
        <taxon>Haplorrhini</taxon>
        <taxon>Catarrhini</taxon>
        <taxon>Hominidae</taxon>
        <taxon>Homo</taxon>
    </lineage>
</organism>
<accession>Q7Z402</accession>
<accession>E7ERB6</accession>
<accession>Q5H9Q8</accession>
<accession>Q7Z5M4</accession>
<accession>Q86WX0</accession>
<accession>Q9H766</accession>
<proteinExistence type="evidence at protein level"/>
<name>TMC7_HUMAN</name>
<comment type="function">
    <text evidence="1">Acts as an inhibitory modulator of PIEZO2 mechanosensitive channel in dorsal root ganglion (DRG) neurons through physical interactions or interference with the interaction between PIEZO2 and the cytoskeleton.</text>
</comment>
<comment type="subunit">
    <text evidence="1">Interacts with PIEZO2; the interaction inhibits PIEZO2-conducted mechanically activated currents.</text>
</comment>
<comment type="subcellular location">
    <subcellularLocation>
        <location evidence="10">Membrane</location>
        <topology evidence="10">Multi-pass membrane protein</topology>
    </subcellularLocation>
</comment>
<comment type="alternative products">
    <event type="alternative splicing"/>
    <isoform>
        <id>Q7Z402-1</id>
        <name>1</name>
        <sequence type="displayed"/>
    </isoform>
    <isoform>
        <id>Q7Z402-2</id>
        <name>2</name>
        <sequence type="described" ref="VSP_054226"/>
    </isoform>
</comment>
<comment type="similarity">
    <text evidence="10">Belongs to the TMC family.</text>
</comment>
<comment type="sequence caution" evidence="10">
    <conflict type="erroneous initiation">
        <sequence resource="EMBL-CDS" id="BAB15032"/>
    </conflict>
    <text>Truncated N-terminus.</text>
</comment>
<feature type="chain" id="PRO_0000287165" description="Transmembrane channel-like protein 7">
    <location>
        <begin position="1"/>
        <end position="723"/>
    </location>
</feature>
<feature type="topological domain" description="Extracellular" evidence="2">
    <location>
        <begin position="1"/>
        <end position="168"/>
    </location>
</feature>
<feature type="transmembrane region" description="Helical" evidence="2">
    <location>
        <begin position="169"/>
        <end position="189"/>
    </location>
</feature>
<feature type="topological domain" description="Cytoplasmic" evidence="2">
    <location>
        <begin position="190"/>
        <end position="219"/>
    </location>
</feature>
<feature type="transmembrane region" description="Helical" evidence="2">
    <location>
        <begin position="220"/>
        <end position="240"/>
    </location>
</feature>
<feature type="topological domain" description="Extracellular" evidence="2">
    <location>
        <begin position="241"/>
        <end position="263"/>
    </location>
</feature>
<feature type="transmembrane region" description="Helical" evidence="2">
    <location>
        <begin position="264"/>
        <end position="284"/>
    </location>
</feature>
<feature type="topological domain" description="Cytoplasmic" evidence="2">
    <location>
        <begin position="285"/>
        <end position="362"/>
    </location>
</feature>
<feature type="transmembrane region" description="Helical" evidence="2">
    <location>
        <begin position="363"/>
        <end position="383"/>
    </location>
</feature>
<feature type="topological domain" description="Extracellular" evidence="2">
    <location>
        <begin position="384"/>
        <end position="404"/>
    </location>
</feature>
<feature type="transmembrane region" description="Helical" evidence="2">
    <location>
        <begin position="405"/>
        <end position="425"/>
    </location>
</feature>
<feature type="topological domain" description="Cytoplasmic" evidence="2">
    <location>
        <begin position="426"/>
        <end position="494"/>
    </location>
</feature>
<feature type="transmembrane region" description="Helical" evidence="2">
    <location>
        <begin position="495"/>
        <end position="515"/>
    </location>
</feature>
<feature type="topological domain" description="Extracellular" evidence="2">
    <location>
        <begin position="516"/>
        <end position="555"/>
    </location>
</feature>
<feature type="transmembrane region" description="Helical" evidence="2">
    <location>
        <begin position="556"/>
        <end position="576"/>
    </location>
</feature>
<feature type="topological domain" description="Cytoplasmic" evidence="2">
    <location>
        <begin position="577"/>
        <end position="601"/>
    </location>
</feature>
<feature type="transmembrane region" description="Helical" evidence="2">
    <location>
        <begin position="602"/>
        <end position="622"/>
    </location>
</feature>
<feature type="topological domain" description="Extracellular" evidence="2">
    <location>
        <begin position="623"/>
        <end position="665"/>
    </location>
</feature>
<feature type="transmembrane region" description="Helical" evidence="2">
    <location>
        <begin position="666"/>
        <end position="686"/>
    </location>
</feature>
<feature type="topological domain" description="Cytoplasmic" evidence="2">
    <location>
        <begin position="687"/>
        <end position="723"/>
    </location>
</feature>
<feature type="region of interest" description="Disordered" evidence="3">
    <location>
        <begin position="1"/>
        <end position="28"/>
    </location>
</feature>
<feature type="region of interest" description="Disordered" evidence="3">
    <location>
        <begin position="51"/>
        <end position="71"/>
    </location>
</feature>
<feature type="modified residue" description="Phosphoserine" evidence="12">
    <location>
        <position position="89"/>
    </location>
</feature>
<feature type="glycosylation site" description="N-linked (GlcNAc...) asparagine" evidence="2">
    <location>
        <position position="24"/>
    </location>
</feature>
<feature type="glycosylation site" description="N-linked (GlcNAc...) asparagine" evidence="2">
    <location>
        <position position="84"/>
    </location>
</feature>
<feature type="glycosylation site" description="N-linked (GlcNAc...) asparagine" evidence="2">
    <location>
        <position position="96"/>
    </location>
</feature>
<feature type="glycosylation site" description="N-linked (GlcNAc...) asparagine" evidence="2">
    <location>
        <position position="259"/>
    </location>
</feature>
<feature type="glycosylation site" description="N-linked (GlcNAc...) asparagine" evidence="2">
    <location>
        <position position="638"/>
    </location>
</feature>
<feature type="splice variant" id="VSP_054226" description="In isoform 2." evidence="8 9">
    <location>
        <begin position="1"/>
        <end position="110"/>
    </location>
</feature>
<feature type="sequence variant" id="VAR_032278" description="In dbSNP:rs17854512." evidence="6">
    <original>R</original>
    <variation>W</variation>
    <location>
        <position position="59"/>
    </location>
</feature>
<feature type="sequence variant" id="VAR_032279" description="In dbSNP:rs4072393." evidence="4 5 6 7">
    <original>G</original>
    <variation>E</variation>
    <location>
        <position position="254"/>
    </location>
</feature>
<feature type="sequence variant" id="VAR_061852" description="In dbSNP:rs55796412.">
    <original>T</original>
    <variation>S</variation>
    <location>
        <position position="355"/>
    </location>
</feature>
<feature type="sequence variant" id="VAR_032280" description="In dbSNP:rs11864159.">
    <original>T</original>
    <variation>I</variation>
    <location>
        <position position="635"/>
    </location>
</feature>
<feature type="sequence conflict" description="In Ref. 1; AAP78780 and 5; AAH36205." evidence="10" ref="1 5">
    <original>P</original>
    <variation>Q</variation>
    <location>
        <position position="18"/>
    </location>
</feature>
<keyword id="KW-0025">Alternative splicing</keyword>
<keyword id="KW-0325">Glycoprotein</keyword>
<keyword id="KW-0472">Membrane</keyword>
<keyword id="KW-0597">Phosphoprotein</keyword>
<keyword id="KW-1267">Proteomics identification</keyword>
<keyword id="KW-1185">Reference proteome</keyword>
<keyword id="KW-0812">Transmembrane</keyword>
<keyword id="KW-1133">Transmembrane helix</keyword>
<protein>
    <recommendedName>
        <fullName>Transmembrane channel-like protein 7</fullName>
    </recommendedName>
</protein>
<gene>
    <name evidence="11" type="primary">TMC7</name>
</gene>
<sequence length="723" mass="83502">MSESSGSALQPGRPSRQPAVHPENLSLDSSCFSSPPVNFLQELPSYRSIARRRTTVHSRDKQSGTLLKPTDSYSSQLEDRIAENLSSHSLRNYALNISEKRRLRDIQETQMKYLSEWDQWKRYSSKSWKRFLEKAREMTTHLELWREDIRSIEGKFGTGIQSYFSFLRFLVLLNLVIFLIIFMLVLLPVLLTKYKITNSSFVLIPFKDMDKQCTVYPVSSSGLIYFYSYIIDLLSGTGFLEETSLFYGHYTIDGVKFQNFTYDLPLAYLLSTIASLALSLLWIVKRSVEGFKINLIRSEEHFQSYCNKIFAGWDFCITNRSMADLKHSSLRYELRADLEEERMRQKIAERTSEETIRIYSLRLFLNCIVLAVLGACFYAIYVATVFSQEHMKKEIDKMVFGENLFILYLPSIVITLANFITPMIFAKIIRYEDYSPGFEIRLTILRCVFMRLATICVLVFTLGSKITSCDDDTCDLCGYNQKLYPCWETQVGQEMYKLMIFDFIIILAVTLFVDFPRKLLVTYCSSCKLIQCWGQQEFAIPDNVLGIVYGQTICWIGAFFSPLLPAIATLKFIIIFYVKEWSLLYTCRPSPRPFRASNSNFFFLLVLLIGLCLAIIPLTISISRIPSSKACGPFTNFNTTWEVIPKTVSTFPSSLQSFIHGVTSEAFAVPFFMIICLIMFYFIALAGAHKRVVIQLREQLSLESRDKCYLIQKLTEAQRDMRN</sequence>
<dbReference type="EMBL" id="AY263165">
    <property type="protein sequence ID" value="AAP78780.1"/>
    <property type="molecule type" value="mRNA"/>
</dbReference>
<dbReference type="EMBL" id="AY236498">
    <property type="protein sequence ID" value="AAP69876.1"/>
    <property type="molecule type" value="mRNA"/>
</dbReference>
<dbReference type="EMBL" id="AC099518">
    <property type="status" value="NOT_ANNOTATED_CDS"/>
    <property type="molecule type" value="Genomic_DNA"/>
</dbReference>
<dbReference type="EMBL" id="BC036205">
    <property type="protein sequence ID" value="AAH36205.1"/>
    <property type="molecule type" value="mRNA"/>
</dbReference>
<dbReference type="EMBL" id="BC047719">
    <property type="protein sequence ID" value="AAH47719.1"/>
    <property type="molecule type" value="mRNA"/>
</dbReference>
<dbReference type="EMBL" id="CR933669">
    <property type="protein sequence ID" value="CAI45966.1"/>
    <property type="molecule type" value="mRNA"/>
</dbReference>
<dbReference type="EMBL" id="AK024893">
    <property type="protein sequence ID" value="BAB15032.1"/>
    <property type="status" value="ALT_INIT"/>
    <property type="molecule type" value="mRNA"/>
</dbReference>
<dbReference type="CCDS" id="CCDS10573.1">
    <molecule id="Q7Z402-1"/>
</dbReference>
<dbReference type="CCDS" id="CCDS53992.1">
    <molecule id="Q7Z402-2"/>
</dbReference>
<dbReference type="RefSeq" id="NP_001153836.1">
    <molecule id="Q7Z402-2"/>
    <property type="nucleotide sequence ID" value="NM_001160364.2"/>
</dbReference>
<dbReference type="RefSeq" id="NP_079123.3">
    <molecule id="Q7Z402-1"/>
    <property type="nucleotide sequence ID" value="NM_024847.4"/>
</dbReference>
<dbReference type="RefSeq" id="XP_047290618.1">
    <molecule id="Q7Z402-2"/>
    <property type="nucleotide sequence ID" value="XM_047434662.1"/>
</dbReference>
<dbReference type="RefSeq" id="XP_054169935.1">
    <molecule id="Q7Z402-2"/>
    <property type="nucleotide sequence ID" value="XM_054313960.1"/>
</dbReference>
<dbReference type="SMR" id="Q7Z402"/>
<dbReference type="BioGRID" id="122988">
    <property type="interactions" value="21"/>
</dbReference>
<dbReference type="FunCoup" id="Q7Z402">
    <property type="interactions" value="333"/>
</dbReference>
<dbReference type="IntAct" id="Q7Z402">
    <property type="interactions" value="6"/>
</dbReference>
<dbReference type="STRING" id="9606.ENSP00000455041"/>
<dbReference type="GlyCosmos" id="Q7Z402">
    <property type="glycosylation" value="5 sites, No reported glycans"/>
</dbReference>
<dbReference type="GlyGen" id="Q7Z402">
    <property type="glycosylation" value="8 sites, 4 N-linked glycans (4 sites), 1 O-linked glycan (1 site)"/>
</dbReference>
<dbReference type="iPTMnet" id="Q7Z402"/>
<dbReference type="PhosphoSitePlus" id="Q7Z402"/>
<dbReference type="SwissPalm" id="Q7Z402"/>
<dbReference type="BioMuta" id="TMC7"/>
<dbReference type="DMDM" id="74713450"/>
<dbReference type="jPOST" id="Q7Z402"/>
<dbReference type="MassIVE" id="Q7Z402"/>
<dbReference type="PaxDb" id="9606-ENSP00000455041"/>
<dbReference type="PeptideAtlas" id="Q7Z402"/>
<dbReference type="ProteomicsDB" id="17753"/>
<dbReference type="ProteomicsDB" id="69105">
    <molecule id="Q7Z402-1"/>
</dbReference>
<dbReference type="Antibodypedia" id="25317">
    <property type="antibodies" value="58 antibodies from 20 providers"/>
</dbReference>
<dbReference type="DNASU" id="79905"/>
<dbReference type="Ensembl" id="ENST00000304381.10">
    <molecule id="Q7Z402-1"/>
    <property type="protein sequence ID" value="ENSP00000304710.5"/>
    <property type="gene ID" value="ENSG00000170537.13"/>
</dbReference>
<dbReference type="Ensembl" id="ENST00000421369.3">
    <molecule id="Q7Z402-2"/>
    <property type="protein sequence ID" value="ENSP00000397081.3"/>
    <property type="gene ID" value="ENSG00000170537.13"/>
</dbReference>
<dbReference type="GeneID" id="79905"/>
<dbReference type="KEGG" id="hsa:79905"/>
<dbReference type="MANE-Select" id="ENST00000304381.10">
    <property type="protein sequence ID" value="ENSP00000304710.5"/>
    <property type="RefSeq nucleotide sequence ID" value="NM_024847.4"/>
    <property type="RefSeq protein sequence ID" value="NP_079123.3"/>
</dbReference>
<dbReference type="UCSC" id="uc002dfq.4">
    <molecule id="Q7Z402-1"/>
    <property type="organism name" value="human"/>
</dbReference>
<dbReference type="AGR" id="HGNC:23000"/>
<dbReference type="CTD" id="79905"/>
<dbReference type="DisGeNET" id="79905"/>
<dbReference type="GeneCards" id="TMC7"/>
<dbReference type="HGNC" id="HGNC:23000">
    <property type="gene designation" value="TMC7"/>
</dbReference>
<dbReference type="HPA" id="ENSG00000170537">
    <property type="expression patterns" value="Tissue enhanced (brain, testis, urinary bladder)"/>
</dbReference>
<dbReference type="neXtProt" id="NX_Q7Z402"/>
<dbReference type="OpenTargets" id="ENSG00000170537"/>
<dbReference type="PharmGKB" id="PA134988099"/>
<dbReference type="VEuPathDB" id="HostDB:ENSG00000170537"/>
<dbReference type="eggNOG" id="ENOG502QPM8">
    <property type="taxonomic scope" value="Eukaryota"/>
</dbReference>
<dbReference type="GeneTree" id="ENSGT01050000244894"/>
<dbReference type="HOGENOM" id="CLU_013958_1_0_1"/>
<dbReference type="InParanoid" id="Q7Z402"/>
<dbReference type="OMA" id="QFFMTFF"/>
<dbReference type="OrthoDB" id="1936208at2759"/>
<dbReference type="PAN-GO" id="Q7Z402">
    <property type="GO annotations" value="1 GO annotation based on evolutionary models"/>
</dbReference>
<dbReference type="PhylomeDB" id="Q7Z402"/>
<dbReference type="TreeFam" id="TF313462"/>
<dbReference type="PathwayCommons" id="Q7Z402"/>
<dbReference type="SignaLink" id="Q7Z402"/>
<dbReference type="BioGRID-ORCS" id="79905">
    <property type="hits" value="9 hits in 1151 CRISPR screens"/>
</dbReference>
<dbReference type="ChiTaRS" id="TMC7">
    <property type="organism name" value="human"/>
</dbReference>
<dbReference type="GenomeRNAi" id="79905"/>
<dbReference type="Pharos" id="Q7Z402">
    <property type="development level" value="Tdark"/>
</dbReference>
<dbReference type="PRO" id="PR:Q7Z402"/>
<dbReference type="Proteomes" id="UP000005640">
    <property type="component" value="Chromosome 16"/>
</dbReference>
<dbReference type="RNAct" id="Q7Z402">
    <property type="molecule type" value="protein"/>
</dbReference>
<dbReference type="Bgee" id="ENSG00000170537">
    <property type="expression patterns" value="Expressed in C1 segment of cervical spinal cord and 122 other cell types or tissues"/>
</dbReference>
<dbReference type="ExpressionAtlas" id="Q7Z402">
    <property type="expression patterns" value="baseline and differential"/>
</dbReference>
<dbReference type="GO" id="GO:0043025">
    <property type="term" value="C:neuronal cell body"/>
    <property type="evidence" value="ECO:0000250"/>
    <property type="project" value="UniProt"/>
</dbReference>
<dbReference type="GO" id="GO:0005886">
    <property type="term" value="C:plasma membrane"/>
    <property type="evidence" value="ECO:0007669"/>
    <property type="project" value="InterPro"/>
</dbReference>
<dbReference type="GO" id="GO:0008200">
    <property type="term" value="F:ion channel inhibitor activity"/>
    <property type="evidence" value="ECO:0000250"/>
    <property type="project" value="UniProtKB"/>
</dbReference>
<dbReference type="GO" id="GO:0008381">
    <property type="term" value="F:mechanosensitive monoatomic ion channel activity"/>
    <property type="evidence" value="ECO:0000318"/>
    <property type="project" value="GO_Central"/>
</dbReference>
<dbReference type="GO" id="GO:0050954">
    <property type="term" value="P:sensory perception of mechanical stimulus"/>
    <property type="evidence" value="ECO:0000250"/>
    <property type="project" value="UniProtKB"/>
</dbReference>
<dbReference type="InterPro" id="IPR038900">
    <property type="entry name" value="TMC"/>
</dbReference>
<dbReference type="InterPro" id="IPR012496">
    <property type="entry name" value="TMC_dom"/>
</dbReference>
<dbReference type="PANTHER" id="PTHR23302:SF42">
    <property type="entry name" value="TRANSMEMBRANE CHANNEL-LIKE PROTEIN 7"/>
    <property type="match status" value="1"/>
</dbReference>
<dbReference type="PANTHER" id="PTHR23302">
    <property type="entry name" value="TRANSMEMBRANE CHANNEL-RELATED"/>
    <property type="match status" value="1"/>
</dbReference>
<dbReference type="Pfam" id="PF07810">
    <property type="entry name" value="TMC"/>
    <property type="match status" value="1"/>
</dbReference>